<accession>Q67186</accession>
<organism>
    <name type="scientific">Influenza A virus (strain A/Swine/Iowa/17672/1988 H1N1)</name>
    <dbReference type="NCBI Taxonomy" id="380341"/>
    <lineage>
        <taxon>Viruses</taxon>
        <taxon>Riboviria</taxon>
        <taxon>Orthornavirae</taxon>
        <taxon>Negarnaviricota</taxon>
        <taxon>Polyploviricotina</taxon>
        <taxon>Insthoviricetes</taxon>
        <taxon>Articulavirales</taxon>
        <taxon>Orthomyxoviridae</taxon>
        <taxon>Alphainfluenzavirus</taxon>
        <taxon>Alphainfluenzavirus influenzae</taxon>
        <taxon>Influenza A virus</taxon>
    </lineage>
</organism>
<reference key="1">
    <citation type="journal article" date="1991" name="J. Virol.">
        <title>Evolutionary analysis of the influenza A virus M gene with comparison of the M1 and M2 proteins.</title>
        <authorList>
            <person name="Ito T."/>
            <person name="Gorman O.T."/>
            <person name="Kawaoka Y."/>
            <person name="Bean W.J."/>
            <person name="Webster R.G."/>
        </authorList>
    </citation>
    <scope>NUCLEOTIDE SEQUENCE [GENOMIC RNA]</scope>
</reference>
<keyword id="KW-0025">Alternative splicing</keyword>
<keyword id="KW-1015">Disulfide bond</keyword>
<keyword id="KW-0325">Glycoprotein</keyword>
<keyword id="KW-1032">Host cell membrane</keyword>
<keyword id="KW-1043">Host membrane</keyword>
<keyword id="KW-0945">Host-virus interaction</keyword>
<keyword id="KW-0375">Hydrogen ion transport</keyword>
<keyword id="KW-1083">Inhibition of host autophagy by virus</keyword>
<keyword id="KW-0407">Ion channel</keyword>
<keyword id="KW-0406">Ion transport</keyword>
<keyword id="KW-0449">Lipoprotein</keyword>
<keyword id="KW-0472">Membrane</keyword>
<keyword id="KW-0564">Palmitate</keyword>
<keyword id="KW-0597">Phosphoprotein</keyword>
<keyword id="KW-0735">Signal-anchor</keyword>
<keyword id="KW-0812">Transmembrane</keyword>
<keyword id="KW-1133">Transmembrane helix</keyword>
<keyword id="KW-0813">Transport</keyword>
<keyword id="KW-1182">Viral ion channel</keyword>
<keyword id="KW-0946">Virion</keyword>
<feature type="chain" id="PRO_0000326387" description="Matrix protein 2">
    <location>
        <begin position="1"/>
        <end position="97"/>
    </location>
</feature>
<feature type="topological domain" description="Virion surface" evidence="1">
    <location>
        <begin position="1"/>
        <end position="22"/>
    </location>
</feature>
<feature type="transmembrane region" description="Helical; Signal-anchor for type III membrane protein" evidence="1">
    <location>
        <begin position="23"/>
        <end position="43"/>
    </location>
</feature>
<feature type="topological domain" description="Intravirion" evidence="1">
    <location>
        <begin position="44"/>
        <end position="97"/>
    </location>
</feature>
<feature type="region of interest" description="Disordered" evidence="2">
    <location>
        <begin position="60"/>
        <end position="84"/>
    </location>
</feature>
<feature type="site" description="Essential for channel activity, possibly by being protonated during channel activation, and by forming the channel gate and the selective filter" evidence="1">
    <location>
        <position position="37"/>
    </location>
</feature>
<feature type="site" description="Seems to be involved in pH gating" evidence="1">
    <location>
        <position position="41"/>
    </location>
</feature>
<feature type="modified residue" description="Phosphoserine; by host" evidence="1">
    <location>
        <position position="64"/>
    </location>
</feature>
<feature type="modified residue" description="Phosphoserine; by host" evidence="1">
    <location>
        <position position="82"/>
    </location>
</feature>
<feature type="lipid moiety-binding region" description="S-palmitoyl cysteine; by host" evidence="1">
    <location>
        <position position="50"/>
    </location>
</feature>
<feature type="glycosylation site" description="N-linked (GlcNAc...) asparagine; by host" evidence="1">
    <location>
        <position position="20"/>
    </location>
</feature>
<feature type="disulfide bond" description="Interchain (with C-17)" evidence="1">
    <location>
        <position position="17"/>
    </location>
</feature>
<feature type="disulfide bond" description="Interchain (with C-19)" evidence="1">
    <location>
        <position position="19"/>
    </location>
</feature>
<dbReference type="EMBL" id="M63522">
    <property type="protein sequence ID" value="AAA43317.1"/>
    <property type="molecule type" value="Genomic_RNA"/>
</dbReference>
<dbReference type="SMR" id="Q67186"/>
<dbReference type="GlyCosmos" id="Q67186">
    <property type="glycosylation" value="1 site, No reported glycans"/>
</dbReference>
<dbReference type="GO" id="GO:0020002">
    <property type="term" value="C:host cell plasma membrane"/>
    <property type="evidence" value="ECO:0007669"/>
    <property type="project" value="UniProtKB-SubCell"/>
</dbReference>
<dbReference type="GO" id="GO:0016020">
    <property type="term" value="C:membrane"/>
    <property type="evidence" value="ECO:0007669"/>
    <property type="project" value="UniProtKB-UniRule"/>
</dbReference>
<dbReference type="GO" id="GO:0055036">
    <property type="term" value="C:virion membrane"/>
    <property type="evidence" value="ECO:0007669"/>
    <property type="project" value="UniProtKB-SubCell"/>
</dbReference>
<dbReference type="GO" id="GO:0005216">
    <property type="term" value="F:monoatomic ion channel activity"/>
    <property type="evidence" value="ECO:0007669"/>
    <property type="project" value="UniProtKB-UniRule"/>
</dbReference>
<dbReference type="GO" id="GO:0015078">
    <property type="term" value="F:proton transmembrane transporter activity"/>
    <property type="evidence" value="ECO:0007669"/>
    <property type="project" value="UniProtKB-UniRule"/>
</dbReference>
<dbReference type="GO" id="GO:0051259">
    <property type="term" value="P:protein complex oligomerization"/>
    <property type="evidence" value="ECO:0007669"/>
    <property type="project" value="UniProtKB-UniRule"/>
</dbReference>
<dbReference type="GO" id="GO:0044694">
    <property type="term" value="P:symbiont genome entry into host cell via pore formation in plasma membrane"/>
    <property type="evidence" value="ECO:0007669"/>
    <property type="project" value="UniProtKB-UniRule"/>
</dbReference>
<dbReference type="GO" id="GO:0140321">
    <property type="term" value="P:symbiont-mediated suppression of host autophagy"/>
    <property type="evidence" value="ECO:0007669"/>
    <property type="project" value="UniProtKB-KW"/>
</dbReference>
<dbReference type="Gene3D" id="6.10.250.1640">
    <property type="match status" value="1"/>
</dbReference>
<dbReference type="HAMAP" id="MF_04069">
    <property type="entry name" value="INFV_M2"/>
    <property type="match status" value="1"/>
</dbReference>
<dbReference type="InterPro" id="IPR002089">
    <property type="entry name" value="Flu_M2"/>
</dbReference>
<dbReference type="Pfam" id="PF00599">
    <property type="entry name" value="Flu_M2"/>
    <property type="match status" value="1"/>
</dbReference>
<protein>
    <recommendedName>
        <fullName evidence="1">Matrix protein 2</fullName>
    </recommendedName>
    <alternativeName>
        <fullName evidence="1">Proton channel protein M2</fullName>
    </alternativeName>
</protein>
<comment type="function">
    <text evidence="1">Forms a proton-selective ion channel that is necessary for the efficient release of the viral genome during virus entry. After attaching to the cell surface, the virion enters the cell by endocytosis. Acidification of the endosome triggers M2 ion channel activity. The influx of protons into virion interior is believed to disrupt interactions between the viral ribonucleoprotein (RNP), matrix protein 1 (M1), and lipid bilayers, thereby freeing the viral genome from interaction with viral proteins and enabling RNA segments to migrate to the host cell nucleus, where influenza virus RNA transcription and replication occur. Also plays a role in viral proteins secretory pathway. Elevates the intravesicular pH of normally acidic compartments, such as trans-Golgi network, preventing newly formed hemagglutinin from premature switching to the fusion-active conformation.</text>
</comment>
<comment type="activity regulation">
    <text>The M2 protein from most influenza A strains is inhibited by amantadine and rimantadine, resulting in viral uncoating incapacity. Emergence of amantadine-resistant variants is usually rapid.</text>
</comment>
<comment type="subunit">
    <text evidence="1">Homotetramer; composed of two disulfide-linked dimers held together by non-covalent interactions. May interact with matrix protein 1.</text>
</comment>
<comment type="subcellular location">
    <subcellularLocation>
        <location evidence="1">Virion membrane</location>
    </subcellularLocation>
    <subcellularLocation>
        <location evidence="1">Host apical cell membrane</location>
        <topology evidence="1">Single-pass type III membrane protein</topology>
    </subcellularLocation>
    <text evidence="1">Abundantly expressed at the apical plasma membrane in infected polarized epithelial cells, in close proximity to budding and assembled virions. Minor component of virions (only 16-20 molecules/virion).</text>
</comment>
<comment type="alternative products">
    <event type="alternative splicing"/>
    <isoform>
        <id>Q67186-1</id>
        <name>M2</name>
        <sequence type="displayed"/>
    </isoform>
    <isoform>
        <id>Q67187-1</id>
        <name>M1</name>
        <sequence type="external"/>
    </isoform>
    <text>Only the first 9 residues are shared by the 2 isoforms.</text>
</comment>
<comment type="domain">
    <text evidence="1">Cytoplasmic tail plays an important role in virion assembly and morphogenesis.</text>
</comment>
<comment type="miscellaneous">
    <text evidence="1">When the channel is activated, one or more imidazole moieties of His-37 probably become bi-protonated.</text>
</comment>
<comment type="similarity">
    <text evidence="1">Belongs to the influenza viruses matrix protein M2 family.</text>
</comment>
<proteinExistence type="inferred from homology"/>
<evidence type="ECO:0000255" key="1">
    <source>
        <dbReference type="HAMAP-Rule" id="MF_04069"/>
    </source>
</evidence>
<evidence type="ECO:0000256" key="2">
    <source>
        <dbReference type="SAM" id="MobiDB-lite"/>
    </source>
</evidence>
<organismHost>
    <name type="scientific">Aves</name>
    <dbReference type="NCBI Taxonomy" id="8782"/>
</organismHost>
<organismHost>
    <name type="scientific">Homo sapiens</name>
    <name type="common">Human</name>
    <dbReference type="NCBI Taxonomy" id="9606"/>
</organismHost>
<organismHost>
    <name type="scientific">Sus scrofa</name>
    <name type="common">Pig</name>
    <dbReference type="NCBI Taxonomy" id="9823"/>
</organismHost>
<gene>
    <name evidence="1" type="primary">M</name>
</gene>
<sequence length="97" mass="11216">MSLLTEVETPIRNEWGCKCNDSSDPLVAVASIIGILHLILWILDRLFFKCIYRRFKYGLKRGPSTEGVPESMREEYRQKQQSAVDVDDGHFVNIELE</sequence>
<name>M2_I88A5</name>